<evidence type="ECO:0000250" key="1">
    <source>
        <dbReference type="UniProtKB" id="P37610"/>
    </source>
</evidence>
<evidence type="ECO:0000256" key="2">
    <source>
        <dbReference type="SAM" id="MobiDB-lite"/>
    </source>
</evidence>
<evidence type="ECO:0000269" key="3">
    <source>
    </source>
</evidence>
<evidence type="ECO:0000269" key="4">
    <source>
    </source>
</evidence>
<evidence type="ECO:0000269" key="5">
    <source>
    </source>
</evidence>
<evidence type="ECO:0000269" key="6">
    <source>
    </source>
</evidence>
<evidence type="ECO:0000303" key="7">
    <source>
    </source>
</evidence>
<evidence type="ECO:0000303" key="8">
    <source>
    </source>
</evidence>
<evidence type="ECO:0000305" key="9"/>
<dbReference type="EC" id="1.14.11.-" evidence="4 6"/>
<dbReference type="EMBL" id="AB570428">
    <property type="protein sequence ID" value="BAJ15869.1"/>
    <property type="molecule type" value="mRNA"/>
</dbReference>
<dbReference type="BioCyc" id="MetaCyc:MONOMER-18711"/>
<dbReference type="GO" id="GO:0051213">
    <property type="term" value="F:dioxygenase activity"/>
    <property type="evidence" value="ECO:0007669"/>
    <property type="project" value="UniProtKB-KW"/>
</dbReference>
<dbReference type="GO" id="GO:0046872">
    <property type="term" value="F:metal ion binding"/>
    <property type="evidence" value="ECO:0007669"/>
    <property type="project" value="UniProtKB-KW"/>
</dbReference>
<dbReference type="Gene3D" id="3.60.130.10">
    <property type="entry name" value="Clavaminate synthase-like"/>
    <property type="match status" value="1"/>
</dbReference>
<dbReference type="InterPro" id="IPR042098">
    <property type="entry name" value="TauD-like_sf"/>
</dbReference>
<dbReference type="InterPro" id="IPR003819">
    <property type="entry name" value="TauD/TfdA-like"/>
</dbReference>
<dbReference type="InterPro" id="IPR051178">
    <property type="entry name" value="TfdA_dioxygenase"/>
</dbReference>
<dbReference type="PANTHER" id="PTHR43779:SF2">
    <property type="entry name" value="ALPHA-KETOGLUTARATE-DEPENDENT XANTHINE DIOXYGENASE XAN1"/>
    <property type="match status" value="1"/>
</dbReference>
<dbReference type="PANTHER" id="PTHR43779">
    <property type="entry name" value="DIOXYGENASE RV0097-RELATED"/>
    <property type="match status" value="1"/>
</dbReference>
<dbReference type="Pfam" id="PF02668">
    <property type="entry name" value="TauD"/>
    <property type="match status" value="1"/>
</dbReference>
<dbReference type="SUPFAM" id="SSF51197">
    <property type="entry name" value="Clavaminate synthase-like"/>
    <property type="match status" value="1"/>
</dbReference>
<protein>
    <recommendedName>
        <fullName evidence="7">Alpha-ketoglutarate-dependent dioxygenase fc-dox</fullName>
        <ecNumber evidence="4 6">1.14.11.-</ecNumber>
    </recommendedName>
    <alternativeName>
        <fullName evidence="8">Fusicoccin A biosynthetic gene clusters protein 2</fullName>
    </alternativeName>
</protein>
<organism>
    <name type="scientific">Phomopsis amygdali</name>
    <name type="common">Fusicoccum amygdali</name>
    <dbReference type="NCBI Taxonomy" id="1214568"/>
    <lineage>
        <taxon>Eukaryota</taxon>
        <taxon>Fungi</taxon>
        <taxon>Dikarya</taxon>
        <taxon>Ascomycota</taxon>
        <taxon>Pezizomycotina</taxon>
        <taxon>Sordariomycetes</taxon>
        <taxon>Sordariomycetidae</taxon>
        <taxon>Diaporthales</taxon>
        <taxon>Diaporthaceae</taxon>
        <taxon>Diaporthe</taxon>
    </lineage>
</organism>
<reference key="1">
    <citation type="journal article" date="2011" name="J. Am. Chem. Soc.">
        <title>Dioxygenases, key enzymes to determine the aglycon structures of fusicoccin and brassicicene, diterpene compounds produced by fungi.</title>
        <authorList>
            <person name="Ono Y."/>
            <person name="Minami A."/>
            <person name="Noike M."/>
            <person name="Higuchi Y."/>
            <person name="Toyomasu T."/>
            <person name="Sassa T."/>
            <person name="Kato N."/>
            <person name="Dairi T."/>
        </authorList>
    </citation>
    <scope>NUCLEOTIDE SEQUENCE [MRNA]</scope>
    <scope>FUNCTION</scope>
    <scope>CATALYTIC ACTIVITY</scope>
    <scope>BIOPHYSICOCHEMICAL PROPERTIES</scope>
    <scope>PATHWAY</scope>
</reference>
<reference key="2">
    <citation type="journal article" date="2007" name="Proc. Natl. Acad. Sci. U.S.A.">
        <title>Fusicoccins are biosynthesized by an unusual chimera diterpene synthase in fungi.</title>
        <authorList>
            <person name="Toyomasu T."/>
            <person name="Tsukahara M."/>
            <person name="Kaneko A."/>
            <person name="Niida R."/>
            <person name="Mitsuhashi W."/>
            <person name="Dairi T."/>
            <person name="Kato N."/>
            <person name="Sassa T."/>
        </authorList>
    </citation>
    <scope>FUNCTION</scope>
</reference>
<reference key="3">
    <citation type="journal article" date="2012" name="ChemBioChem">
        <title>An enzyme catalyzing O-prenylation of the glucose moiety of fusicoccin A, a diterpene glucoside produced by the fungus Phomopsis amygdali.</title>
        <authorList>
            <person name="Noike M."/>
            <person name="Liu C."/>
            <person name="Ono Y."/>
            <person name="Hamano Y."/>
            <person name="Toyomasu T."/>
            <person name="Sassa T."/>
            <person name="Kato N."/>
            <person name="Dairi T."/>
        </authorList>
    </citation>
    <scope>FUNCTION</scope>
</reference>
<reference key="4">
    <citation type="journal article" date="2012" name="PLoS ONE">
        <title>Molecular breeding of a fungus producing a precursor diterpene suitable for semi-synthesis by dissection of the biosynthetic machinery.</title>
        <authorList>
            <person name="Noike M."/>
            <person name="Ono Y."/>
            <person name="Araki Y."/>
            <person name="Tanio R."/>
            <person name="Higuchi Y."/>
            <person name="Nitta H."/>
            <person name="Hamano Y."/>
            <person name="Toyomasu T."/>
            <person name="Sassa T."/>
            <person name="Kato N."/>
            <person name="Dairi T."/>
        </authorList>
    </citation>
    <scope>FUNCTION</scope>
    <scope>CATALYTIC ACTIVITY</scope>
    <scope>PATHWAY</scope>
</reference>
<name>FC2_PHOAM</name>
<feature type="chain" id="PRO_0000445457" description="Alpha-ketoglutarate-dependent dioxygenase fc-dox">
    <location>
        <begin position="1"/>
        <end position="399"/>
    </location>
</feature>
<feature type="region of interest" description="Disordered" evidence="2">
    <location>
        <begin position="371"/>
        <end position="399"/>
    </location>
</feature>
<feature type="binding site" evidence="1">
    <location>
        <position position="158"/>
    </location>
    <ligand>
        <name>Fe cation</name>
        <dbReference type="ChEBI" id="CHEBI:24875"/>
        <note>catalytic</note>
    </ligand>
</feature>
<feature type="binding site" evidence="1">
    <location>
        <position position="160"/>
    </location>
    <ligand>
        <name>Fe cation</name>
        <dbReference type="ChEBI" id="CHEBI:24875"/>
        <note>catalytic</note>
    </ligand>
</feature>
<feature type="binding site" evidence="1">
    <location>
        <position position="203"/>
    </location>
    <ligand>
        <name>2-oxoglutarate</name>
        <dbReference type="ChEBI" id="CHEBI:16810"/>
    </ligand>
</feature>
<feature type="binding site" evidence="1">
    <location>
        <position position="355"/>
    </location>
    <ligand>
        <name>Fe cation</name>
        <dbReference type="ChEBI" id="CHEBI:24875"/>
        <note>catalytic</note>
    </ligand>
</feature>
<feature type="binding site" evidence="1">
    <location>
        <position position="367"/>
    </location>
    <ligand>
        <name>2-oxoglutarate</name>
        <dbReference type="ChEBI" id="CHEBI:16810"/>
    </ligand>
</feature>
<comment type="function">
    <text evidence="3 4 5 6">Alpha-ketoglutarate-dependent dioxygenase; part of the 2 gene clusters that mediate the biosynthesis of fusicoccins, diterpene glucosides that display phytohormone-like activity and function as potent activators of plasma membrane H(+)-ATPases in plants by modifying 14-3-3 proteins and cause the plant disease constriction canker (PubMed:21299202, PubMed:22870285). The first step in the pathway is performed by the fusicoccadiene synthase PaFS that possesses both prenyl transferase and terpene cyclase activity, converting isopentenyl diphosphate and dimethylallyl diphosphate into geranylgeranyl diphosphate (GGDP) and successively converting GGDP into fusicocca-2,10(14)-diene, a precursor for fusicoccin H (PubMed:17360612). The second step is the oxidation at the C-8 position by the cytochrome P450 monooxygenase PaP450-2 to yield fusicocca-2,10(14)-diene-8-beta-ol (PubMed:22870285). The cytochrome P450 monooxygenase PaP450-1 then catalyzes the hydroxylation at the C-16 position to produce fusicocca-2,10(14)-diene-8-beta,16-diol (PubMed:22870285). The dioxygenase fc-dox then catalyzes the 16-oxydation of fusicocca-2,10(14)-diene-8-beta,16-diol to yield an aldehyde (8-beta-hydroxyfusicocca-1,10(14)-dien-16-al) (PubMed:21299202, PubMed:22870285). The short-chain dehydrogenase/reductase fc-sdr catalyzes the reduction of the aldehyde to yield fusicocca-1,10(14)-diene-8-beta,16-diol (PubMed:21299202, PubMed:22870285). The next step is the hydroxylation at C-9 performed by the cytochrome P450 monooxygenase PaP450-3 that leads to fusicoccin H aglycon which is glycosylated to fusicoccin H by the O-glycosyltransferase PaGT (PubMed:22870285). Hydroxylation at C-12 by the cytochrome P450 monooxygenase PaP450-4 leads then to the production of fusicoccin Q and is followed by methylation by the O-methyltransferase PaMT to yield fusicoccin P (PubMed:22870285). Fusicoccin P is further converted to fusicoccin J via prenylation by the O-glucose prenyltransferase PaPT (PubMed:22287087). Cytochrome P450 monooxygenase PaP450-5 then performs hydroxylation at C-19 to yield dideacetyl-fusicoccin A which is acetylated to 3'-O-deacetyl-fusicoccin A by the O-acetyltransferase PaAT-2 (PubMed:22870285). Finally, a another acetylation by the O-acetyltransferase PaAT-1 yields fusicoccin A (PubMed:22870285).</text>
</comment>
<comment type="cofactor">
    <cofactor evidence="1">
        <name>Fe(2+)</name>
        <dbReference type="ChEBI" id="CHEBI:29033"/>
    </cofactor>
    <text evidence="1">Binds 1 Fe(2+) ion per subunit.</text>
</comment>
<comment type="pathway">
    <text evidence="4 6">Mycotoxin biosynthesis.</text>
</comment>
<comment type="similarity">
    <text evidence="9">Belongs to the TfdA dioxygenase family.</text>
</comment>
<keyword id="KW-0223">Dioxygenase</keyword>
<keyword id="KW-0408">Iron</keyword>
<keyword id="KW-0479">Metal-binding</keyword>
<keyword id="KW-0560">Oxidoreductase</keyword>
<accession>E0D7H6</accession>
<gene>
    <name evidence="7" type="primary">fc-dox</name>
    <name evidence="8" type="synonym">orf2</name>
</gene>
<sequence length="399" mass="46007">MGSTAEDFVIKPMKGEHGFGAEIYGLDVNNITDEQVDRLRDTIQRYLLVVLKHQHDETPQKNWELLNRLSPDAPKFTPEEWALMYNPDPQGAGILPKLGYLVLPGTERLFLMGKGYQGEDHWGLKDIDIPEVFADAYYSKPLPHEDYHNGVARFQSWHIDGPSYKIDHPMFTSFRIIKFPEGEQTVDWADGSGLTKKVKAGRTAFFSSAKLYDMLTKEEQAIADYSWAEYMYFPYEWILRCRGNPQGLLVACEGREVPDEQMDAMPRNPEDQLVLPLVWVNPVTGGKHFHVQPNIVRRVFVRSGPDEEPKIIDDVKEVRDFFTKFQYRIIRPENIYVGPEEEGDQLLFFNWGVMHSKIDYPIEMGTRTTHQGWLAGDRPPKGPVPIPDPRARSSIYYQK</sequence>
<proteinExistence type="evidence at protein level"/>